<proteinExistence type="inferred from homology"/>
<name>TRMB_AZOC5</name>
<comment type="function">
    <text evidence="2">Catalyzes the formation of N(7)-methylguanine at position 46 (m7G46) in tRNA.</text>
</comment>
<comment type="catalytic activity">
    <reaction evidence="2">
        <text>guanosine(46) in tRNA + S-adenosyl-L-methionine = N(7)-methylguanosine(46) in tRNA + S-adenosyl-L-homocysteine</text>
        <dbReference type="Rhea" id="RHEA:42708"/>
        <dbReference type="Rhea" id="RHEA-COMP:10188"/>
        <dbReference type="Rhea" id="RHEA-COMP:10189"/>
        <dbReference type="ChEBI" id="CHEBI:57856"/>
        <dbReference type="ChEBI" id="CHEBI:59789"/>
        <dbReference type="ChEBI" id="CHEBI:74269"/>
        <dbReference type="ChEBI" id="CHEBI:74480"/>
        <dbReference type="EC" id="2.1.1.33"/>
    </reaction>
</comment>
<comment type="pathway">
    <text evidence="2">tRNA modification; N(7)-methylguanine-tRNA biosynthesis.</text>
</comment>
<comment type="similarity">
    <text evidence="2">Belongs to the class I-like SAM-binding methyltransferase superfamily. TrmB family.</text>
</comment>
<evidence type="ECO:0000250" key="1"/>
<evidence type="ECO:0000255" key="2">
    <source>
        <dbReference type="HAMAP-Rule" id="MF_01057"/>
    </source>
</evidence>
<accession>A8IG13</accession>
<feature type="chain" id="PRO_1000072995" description="tRNA (guanine-N(7)-)-methyltransferase">
    <location>
        <begin position="1"/>
        <end position="230"/>
    </location>
</feature>
<feature type="active site" evidence="1">
    <location>
        <position position="135"/>
    </location>
</feature>
<feature type="binding site" evidence="2">
    <location>
        <position position="61"/>
    </location>
    <ligand>
        <name>S-adenosyl-L-methionine</name>
        <dbReference type="ChEBI" id="CHEBI:59789"/>
    </ligand>
</feature>
<feature type="binding site" evidence="2">
    <location>
        <position position="86"/>
    </location>
    <ligand>
        <name>S-adenosyl-L-methionine</name>
        <dbReference type="ChEBI" id="CHEBI:59789"/>
    </ligand>
</feature>
<feature type="binding site" evidence="2">
    <location>
        <position position="113"/>
    </location>
    <ligand>
        <name>S-adenosyl-L-methionine</name>
        <dbReference type="ChEBI" id="CHEBI:59789"/>
    </ligand>
</feature>
<feature type="binding site" evidence="2">
    <location>
        <position position="135"/>
    </location>
    <ligand>
        <name>S-adenosyl-L-methionine</name>
        <dbReference type="ChEBI" id="CHEBI:59789"/>
    </ligand>
</feature>
<feature type="binding site" evidence="2">
    <location>
        <position position="139"/>
    </location>
    <ligand>
        <name>substrate</name>
    </ligand>
</feature>
<feature type="binding site" evidence="2">
    <location>
        <position position="171"/>
    </location>
    <ligand>
        <name>substrate</name>
    </ligand>
</feature>
<feature type="binding site" evidence="2">
    <location>
        <begin position="209"/>
        <end position="212"/>
    </location>
    <ligand>
        <name>substrate</name>
    </ligand>
</feature>
<organism>
    <name type="scientific">Azorhizobium caulinodans (strain ATCC 43989 / DSM 5975 / JCM 20966 / LMG 6465 / NBRC 14845 / NCIMB 13405 / ORS 571)</name>
    <dbReference type="NCBI Taxonomy" id="438753"/>
    <lineage>
        <taxon>Bacteria</taxon>
        <taxon>Pseudomonadati</taxon>
        <taxon>Pseudomonadota</taxon>
        <taxon>Alphaproteobacteria</taxon>
        <taxon>Hyphomicrobiales</taxon>
        <taxon>Xanthobacteraceae</taxon>
        <taxon>Azorhizobium</taxon>
    </lineage>
</organism>
<protein>
    <recommendedName>
        <fullName evidence="2">tRNA (guanine-N(7)-)-methyltransferase</fullName>
        <ecNumber evidence="2">2.1.1.33</ecNumber>
    </recommendedName>
    <alternativeName>
        <fullName evidence="2">tRNA (guanine(46)-N(7))-methyltransferase</fullName>
    </alternativeName>
    <alternativeName>
        <fullName evidence="2">tRNA(m7G46)-methyltransferase</fullName>
    </alternativeName>
</protein>
<keyword id="KW-0489">Methyltransferase</keyword>
<keyword id="KW-1185">Reference proteome</keyword>
<keyword id="KW-0949">S-adenosyl-L-methionine</keyword>
<keyword id="KW-0808">Transferase</keyword>
<keyword id="KW-0819">tRNA processing</keyword>
<gene>
    <name evidence="2" type="primary">trmB</name>
    <name type="ordered locus">AZC_0015</name>
</gene>
<reference key="1">
    <citation type="submission" date="2007-04" db="EMBL/GenBank/DDBJ databases">
        <title>Complete genome sequence of the nitrogen-fixing bacterium Azorhizobium caulinodans ORS571.</title>
        <authorList>
            <person name="Lee K.B."/>
            <person name="Backer P.D."/>
            <person name="Aono T."/>
            <person name="Liu C.T."/>
            <person name="Suzuki S."/>
            <person name="Suzuki T."/>
            <person name="Kaneko T."/>
            <person name="Yamada M."/>
            <person name="Tabata S."/>
            <person name="Kupfer D.M."/>
            <person name="Najar F.Z."/>
            <person name="Wiley G.B."/>
            <person name="Roe B."/>
            <person name="Binnewies T."/>
            <person name="Ussery D."/>
            <person name="Vereecke D."/>
            <person name="Gevers D."/>
            <person name="Holsters M."/>
            <person name="Oyaizu H."/>
        </authorList>
    </citation>
    <scope>NUCLEOTIDE SEQUENCE [LARGE SCALE GENOMIC DNA]</scope>
    <source>
        <strain>ATCC 43989 / DSM 5975 / JCM 20966 / LMG 6465 / NBRC 14845 / NCIMB 13405 / ORS 571</strain>
    </source>
</reference>
<sequence>MTALSETEHKGAFYGRRVGKTLRQGQQQALARTLPRYLIDLPTVAEPAALFPCPVDEIRLEIGFGGGEHLLSEAKRFPRAGYIGIEPFLNGMAKAVLELDLAPQENVRLFNLDAALLLARLPEGSVSQVELLYPDPWPKRRHWKRRFVRPDNLDLLARALKPGGVFRFASDVPDYVDWTLREVRAHPAFRWTQTRADDWRTPYEGWPGTRYEAKAIAAGRVPTYLSFARV</sequence>
<dbReference type="EC" id="2.1.1.33" evidence="2"/>
<dbReference type="EMBL" id="AP009384">
    <property type="protein sequence ID" value="BAF86013.1"/>
    <property type="molecule type" value="Genomic_DNA"/>
</dbReference>
<dbReference type="SMR" id="A8IG13"/>
<dbReference type="STRING" id="438753.AZC_0015"/>
<dbReference type="KEGG" id="azc:AZC_0015"/>
<dbReference type="eggNOG" id="COG0220">
    <property type="taxonomic scope" value="Bacteria"/>
</dbReference>
<dbReference type="HOGENOM" id="CLU_050910_0_3_5"/>
<dbReference type="UniPathway" id="UPA00989"/>
<dbReference type="Proteomes" id="UP000000270">
    <property type="component" value="Chromosome"/>
</dbReference>
<dbReference type="GO" id="GO:0043527">
    <property type="term" value="C:tRNA methyltransferase complex"/>
    <property type="evidence" value="ECO:0007669"/>
    <property type="project" value="TreeGrafter"/>
</dbReference>
<dbReference type="GO" id="GO:0008176">
    <property type="term" value="F:tRNA (guanine(46)-N7)-methyltransferase activity"/>
    <property type="evidence" value="ECO:0007669"/>
    <property type="project" value="UniProtKB-UniRule"/>
</dbReference>
<dbReference type="Gene3D" id="3.40.50.150">
    <property type="entry name" value="Vaccinia Virus protein VP39"/>
    <property type="match status" value="1"/>
</dbReference>
<dbReference type="HAMAP" id="MF_01057">
    <property type="entry name" value="tRNA_methyltr_TrmB"/>
    <property type="match status" value="1"/>
</dbReference>
<dbReference type="InterPro" id="IPR029063">
    <property type="entry name" value="SAM-dependent_MTases_sf"/>
</dbReference>
<dbReference type="InterPro" id="IPR003358">
    <property type="entry name" value="tRNA_(Gua-N-7)_MeTrfase_Trmb"/>
</dbReference>
<dbReference type="InterPro" id="IPR055361">
    <property type="entry name" value="tRNA_methyltr_TrmB_bact"/>
</dbReference>
<dbReference type="PANTHER" id="PTHR23417">
    <property type="entry name" value="3-DEOXY-D-MANNO-OCTULOSONIC-ACID TRANSFERASE/TRNA GUANINE-N 7 - -METHYLTRANSFERASE"/>
    <property type="match status" value="1"/>
</dbReference>
<dbReference type="PANTHER" id="PTHR23417:SF14">
    <property type="entry name" value="PENTACOTRIPEPTIDE-REPEAT REGION OF PRORP DOMAIN-CONTAINING PROTEIN"/>
    <property type="match status" value="1"/>
</dbReference>
<dbReference type="Pfam" id="PF02390">
    <property type="entry name" value="Methyltransf_4"/>
    <property type="match status" value="1"/>
</dbReference>
<dbReference type="SUPFAM" id="SSF53335">
    <property type="entry name" value="S-adenosyl-L-methionine-dependent methyltransferases"/>
    <property type="match status" value="1"/>
</dbReference>
<dbReference type="PROSITE" id="PS51625">
    <property type="entry name" value="SAM_MT_TRMB"/>
    <property type="match status" value="1"/>
</dbReference>